<dbReference type="EMBL" id="CP000679">
    <property type="protein sequence ID" value="ABP67065.1"/>
    <property type="molecule type" value="Genomic_DNA"/>
</dbReference>
<dbReference type="RefSeq" id="WP_011917001.1">
    <property type="nucleotide sequence ID" value="NC_009437.1"/>
</dbReference>
<dbReference type="SMR" id="A4XJI0"/>
<dbReference type="STRING" id="351627.Csac_1465"/>
<dbReference type="KEGG" id="csc:Csac_1465"/>
<dbReference type="eggNOG" id="COG0359">
    <property type="taxonomic scope" value="Bacteria"/>
</dbReference>
<dbReference type="HOGENOM" id="CLU_078938_3_0_9"/>
<dbReference type="OrthoDB" id="9788336at2"/>
<dbReference type="Proteomes" id="UP000000256">
    <property type="component" value="Chromosome"/>
</dbReference>
<dbReference type="GO" id="GO:1990904">
    <property type="term" value="C:ribonucleoprotein complex"/>
    <property type="evidence" value="ECO:0007669"/>
    <property type="project" value="UniProtKB-KW"/>
</dbReference>
<dbReference type="GO" id="GO:0005840">
    <property type="term" value="C:ribosome"/>
    <property type="evidence" value="ECO:0007669"/>
    <property type="project" value="UniProtKB-KW"/>
</dbReference>
<dbReference type="GO" id="GO:0019843">
    <property type="term" value="F:rRNA binding"/>
    <property type="evidence" value="ECO:0007669"/>
    <property type="project" value="UniProtKB-UniRule"/>
</dbReference>
<dbReference type="GO" id="GO:0003735">
    <property type="term" value="F:structural constituent of ribosome"/>
    <property type="evidence" value="ECO:0007669"/>
    <property type="project" value="InterPro"/>
</dbReference>
<dbReference type="GO" id="GO:0006412">
    <property type="term" value="P:translation"/>
    <property type="evidence" value="ECO:0007669"/>
    <property type="project" value="UniProtKB-UniRule"/>
</dbReference>
<dbReference type="Gene3D" id="3.10.430.100">
    <property type="entry name" value="Ribosomal protein L9, C-terminal domain"/>
    <property type="match status" value="1"/>
</dbReference>
<dbReference type="Gene3D" id="3.40.5.10">
    <property type="entry name" value="Ribosomal protein L9, N-terminal domain"/>
    <property type="match status" value="1"/>
</dbReference>
<dbReference type="HAMAP" id="MF_00503">
    <property type="entry name" value="Ribosomal_bL9"/>
    <property type="match status" value="1"/>
</dbReference>
<dbReference type="InterPro" id="IPR000244">
    <property type="entry name" value="Ribosomal_bL9"/>
</dbReference>
<dbReference type="InterPro" id="IPR009027">
    <property type="entry name" value="Ribosomal_bL9/RNase_H1_N"/>
</dbReference>
<dbReference type="InterPro" id="IPR020594">
    <property type="entry name" value="Ribosomal_bL9_bac/chp"/>
</dbReference>
<dbReference type="InterPro" id="IPR020069">
    <property type="entry name" value="Ribosomal_bL9_C"/>
</dbReference>
<dbReference type="InterPro" id="IPR036791">
    <property type="entry name" value="Ribosomal_bL9_C_sf"/>
</dbReference>
<dbReference type="InterPro" id="IPR020070">
    <property type="entry name" value="Ribosomal_bL9_N"/>
</dbReference>
<dbReference type="InterPro" id="IPR036935">
    <property type="entry name" value="Ribosomal_bL9_N_sf"/>
</dbReference>
<dbReference type="NCBIfam" id="TIGR00158">
    <property type="entry name" value="L9"/>
    <property type="match status" value="1"/>
</dbReference>
<dbReference type="PANTHER" id="PTHR21368">
    <property type="entry name" value="50S RIBOSOMAL PROTEIN L9"/>
    <property type="match status" value="1"/>
</dbReference>
<dbReference type="Pfam" id="PF03948">
    <property type="entry name" value="Ribosomal_L9_C"/>
    <property type="match status" value="1"/>
</dbReference>
<dbReference type="Pfam" id="PF01281">
    <property type="entry name" value="Ribosomal_L9_N"/>
    <property type="match status" value="1"/>
</dbReference>
<dbReference type="SUPFAM" id="SSF55658">
    <property type="entry name" value="L9 N-domain-like"/>
    <property type="match status" value="1"/>
</dbReference>
<dbReference type="SUPFAM" id="SSF55653">
    <property type="entry name" value="Ribosomal protein L9 C-domain"/>
    <property type="match status" value="1"/>
</dbReference>
<evidence type="ECO:0000255" key="1">
    <source>
        <dbReference type="HAMAP-Rule" id="MF_00503"/>
    </source>
</evidence>
<evidence type="ECO:0000305" key="2"/>
<name>RL9_CALS8</name>
<protein>
    <recommendedName>
        <fullName evidence="1">Large ribosomal subunit protein bL9</fullName>
    </recommendedName>
    <alternativeName>
        <fullName evidence="2">50S ribosomal protein L9</fullName>
    </alternativeName>
</protein>
<feature type="chain" id="PRO_1000014757" description="Large ribosomal subunit protein bL9">
    <location>
        <begin position="1"/>
        <end position="148"/>
    </location>
</feature>
<keyword id="KW-0687">Ribonucleoprotein</keyword>
<keyword id="KW-0689">Ribosomal protein</keyword>
<keyword id="KW-0694">RNA-binding</keyword>
<keyword id="KW-0699">rRNA-binding</keyword>
<gene>
    <name evidence="1" type="primary">rplI</name>
    <name type="ordered locus">Csac_1465</name>
</gene>
<accession>A4XJI0</accession>
<comment type="function">
    <text evidence="1">Binds to the 23S rRNA.</text>
</comment>
<comment type="similarity">
    <text evidence="1">Belongs to the bacterial ribosomal protein bL9 family.</text>
</comment>
<sequence>MKVVLLQDVKGLGKKDSIVEVNDGYARNYLIPRKLAAPLTEGLEKHIKEKKEAEQKKKEKELMLAKDLADKLEKSQVIIKAKAGENGKLFGSITNKEIADEIKRQLGIDMDKKKIELEDPIKQIGSYEVSIRLYQGIVAKLKVHVTSS</sequence>
<organism>
    <name type="scientific">Caldicellulosiruptor saccharolyticus (strain ATCC 43494 / DSM 8903 / Tp8T 6331)</name>
    <dbReference type="NCBI Taxonomy" id="351627"/>
    <lineage>
        <taxon>Bacteria</taxon>
        <taxon>Bacillati</taxon>
        <taxon>Bacillota</taxon>
        <taxon>Bacillota incertae sedis</taxon>
        <taxon>Caldicellulosiruptorales</taxon>
        <taxon>Caldicellulosiruptoraceae</taxon>
        <taxon>Caldicellulosiruptor</taxon>
    </lineage>
</organism>
<reference key="1">
    <citation type="submission" date="2007-04" db="EMBL/GenBank/DDBJ databases">
        <title>Genome sequence of the thermophilic hydrogen-producing bacterium Caldicellulosiruptor saccharolyticus DSM 8903.</title>
        <authorList>
            <person name="Copeland A."/>
            <person name="Lucas S."/>
            <person name="Lapidus A."/>
            <person name="Barry K."/>
            <person name="Detter J.C."/>
            <person name="Glavina del Rio T."/>
            <person name="Hammon N."/>
            <person name="Israni S."/>
            <person name="Dalin E."/>
            <person name="Tice H."/>
            <person name="Pitluck S."/>
            <person name="Kiss H."/>
            <person name="Brettin T."/>
            <person name="Bruce D."/>
            <person name="Han C."/>
            <person name="Schmutz J."/>
            <person name="Larimer F."/>
            <person name="Land M."/>
            <person name="Hauser L."/>
            <person name="Kyrpides N."/>
            <person name="Lykidis A."/>
            <person name="van de Werken H.J.G."/>
            <person name="Verhaart M.R.A."/>
            <person name="VanFossen A.L."/>
            <person name="Lewis D.L."/>
            <person name="Nichols J.D."/>
            <person name="Goorissen H.P."/>
            <person name="van Niel E.W.J."/>
            <person name="Stams F.J.M."/>
            <person name="Willquist K.U."/>
            <person name="Ward D.E."/>
            <person name="van der Oost J."/>
            <person name="Kelly R.M."/>
            <person name="Kengen S.M.W."/>
            <person name="Richardson P."/>
        </authorList>
    </citation>
    <scope>NUCLEOTIDE SEQUENCE [LARGE SCALE GENOMIC DNA]</scope>
    <source>
        <strain>ATCC 43494 / DSM 8903 / Tp8T 6331</strain>
    </source>
</reference>
<proteinExistence type="inferred from homology"/>